<sequence length="299" mass="33207">MSSIKIECVLPENCQCGESPVWEEASNSLLFVDIPAKKVCRWDSLTKQVQRVTVDAPVSSVALHRSGDYVATIGTKFCALNWKEQSAVVLATVDNDKKNNRFNDGKVDPAGRYFAGTMAEETAPAVLERHQGALYSLFPDHHVKKYFDQVDISNGLDWSLDHKIFYYIDSLSYSVDAFDYDLQTGQISNRRSVYKLEKEEQIPDGMCIDAEGKLWVACYNGGRVIRLDPVTGKRLHTVKLPVDKTTSCCFGGKNYSEMYVTCARDGMDPEGLLRQPEAGGIFKITGLGVKGIAPYSYAG</sequence>
<organism>
    <name type="scientific">Pongo abelii</name>
    <name type="common">Sumatran orangutan</name>
    <name type="synonym">Pongo pygmaeus abelii</name>
    <dbReference type="NCBI Taxonomy" id="9601"/>
    <lineage>
        <taxon>Eukaryota</taxon>
        <taxon>Metazoa</taxon>
        <taxon>Chordata</taxon>
        <taxon>Craniata</taxon>
        <taxon>Vertebrata</taxon>
        <taxon>Euteleostomi</taxon>
        <taxon>Mammalia</taxon>
        <taxon>Eutheria</taxon>
        <taxon>Euarchontoglires</taxon>
        <taxon>Primates</taxon>
        <taxon>Haplorrhini</taxon>
        <taxon>Catarrhini</taxon>
        <taxon>Hominidae</taxon>
        <taxon>Pongo</taxon>
    </lineage>
</organism>
<gene>
    <name type="primary">RGN</name>
    <name type="synonym">SMP30</name>
</gene>
<keyword id="KW-0106">Calcium</keyword>
<keyword id="KW-0963">Cytoplasm</keyword>
<keyword id="KW-0378">Hydrolase</keyword>
<keyword id="KW-0479">Metal-binding</keyword>
<keyword id="KW-1185">Reference proteome</keyword>
<evidence type="ECO:0000250" key="1"/>
<evidence type="ECO:0000250" key="2">
    <source>
        <dbReference type="UniProtKB" id="Q64374"/>
    </source>
</evidence>
<evidence type="ECO:0000305" key="3"/>
<protein>
    <recommendedName>
        <fullName>Regucalcin</fullName>
        <shortName>RC</shortName>
    </recommendedName>
    <alternativeName>
        <fullName>Gluconolactonase</fullName>
        <shortName>GNL</shortName>
        <ecNumber>3.1.1.17</ecNumber>
    </alternativeName>
    <alternativeName>
        <fullName>Senescence marker protein 30</fullName>
        <shortName>SMP-30</shortName>
    </alternativeName>
</protein>
<feature type="chain" id="PRO_0000250477" description="Regucalcin">
    <location>
        <begin position="1"/>
        <end position="299"/>
    </location>
</feature>
<feature type="active site" description="Proton donor/acceptor" evidence="1">
    <location>
        <position position="204"/>
    </location>
</feature>
<feature type="binding site" evidence="1">
    <location>
        <position position="18"/>
    </location>
    <ligand>
        <name>a divalent metal cation</name>
        <dbReference type="ChEBI" id="CHEBI:60240"/>
    </ligand>
</feature>
<feature type="binding site" evidence="1">
    <location>
        <position position="101"/>
    </location>
    <ligand>
        <name>substrate</name>
    </ligand>
</feature>
<feature type="binding site" evidence="1">
    <location>
        <position position="103"/>
    </location>
    <ligand>
        <name>substrate</name>
    </ligand>
</feature>
<feature type="binding site" evidence="1">
    <location>
        <position position="121"/>
    </location>
    <ligand>
        <name>substrate</name>
    </ligand>
</feature>
<feature type="binding site" evidence="1">
    <location>
        <position position="154"/>
    </location>
    <ligand>
        <name>a divalent metal cation</name>
        <dbReference type="ChEBI" id="CHEBI:60240"/>
    </ligand>
</feature>
<feature type="binding site" evidence="1">
    <location>
        <position position="204"/>
    </location>
    <ligand>
        <name>a divalent metal cation</name>
        <dbReference type="ChEBI" id="CHEBI:60240"/>
    </ligand>
</feature>
<feature type="modified residue" description="N6-succinyllysine" evidence="2">
    <location>
        <position position="144"/>
    </location>
</feature>
<feature type="modified residue" description="N6-succinyllysine" evidence="2">
    <location>
        <position position="244"/>
    </location>
</feature>
<feature type="modified residue" description="N6-succinyllysine" evidence="2">
    <location>
        <position position="253"/>
    </location>
</feature>
<dbReference type="EC" id="3.1.1.17"/>
<dbReference type="EMBL" id="CR859918">
    <property type="protein sequence ID" value="CAH92073.1"/>
    <property type="molecule type" value="mRNA"/>
</dbReference>
<dbReference type="RefSeq" id="NP_001127502.1">
    <property type="nucleotide sequence ID" value="NM_001134030.2"/>
</dbReference>
<dbReference type="SMR" id="Q5R837"/>
<dbReference type="FunCoup" id="Q5R837">
    <property type="interactions" value="572"/>
</dbReference>
<dbReference type="STRING" id="9601.ENSPPYP00000022700"/>
<dbReference type="GeneID" id="100174578"/>
<dbReference type="KEGG" id="pon:100174578"/>
<dbReference type="CTD" id="9104"/>
<dbReference type="eggNOG" id="KOG4499">
    <property type="taxonomic scope" value="Eukaryota"/>
</dbReference>
<dbReference type="InParanoid" id="Q5R837"/>
<dbReference type="OrthoDB" id="423498at2759"/>
<dbReference type="Proteomes" id="UP000001595">
    <property type="component" value="Unplaced"/>
</dbReference>
<dbReference type="GO" id="GO:0005737">
    <property type="term" value="C:cytoplasm"/>
    <property type="evidence" value="ECO:0000250"/>
    <property type="project" value="UniProtKB"/>
</dbReference>
<dbReference type="GO" id="GO:0005634">
    <property type="term" value="C:nucleus"/>
    <property type="evidence" value="ECO:0000250"/>
    <property type="project" value="UniProtKB"/>
</dbReference>
<dbReference type="GO" id="GO:0005509">
    <property type="term" value="F:calcium ion binding"/>
    <property type="evidence" value="ECO:0000250"/>
    <property type="project" value="UniProtKB"/>
</dbReference>
<dbReference type="GO" id="GO:0030234">
    <property type="term" value="F:enzyme regulator activity"/>
    <property type="evidence" value="ECO:0007669"/>
    <property type="project" value="InterPro"/>
</dbReference>
<dbReference type="GO" id="GO:0004341">
    <property type="term" value="F:gluconolactonase activity"/>
    <property type="evidence" value="ECO:0000250"/>
    <property type="project" value="UniProtKB"/>
</dbReference>
<dbReference type="GO" id="GO:0008270">
    <property type="term" value="F:zinc ion binding"/>
    <property type="evidence" value="ECO:0000250"/>
    <property type="project" value="UniProtKB"/>
</dbReference>
<dbReference type="GO" id="GO:0006874">
    <property type="term" value="P:intracellular calcium ion homeostasis"/>
    <property type="evidence" value="ECO:0000250"/>
    <property type="project" value="UniProtKB"/>
</dbReference>
<dbReference type="GO" id="GO:0019853">
    <property type="term" value="P:L-ascorbic acid biosynthetic process"/>
    <property type="evidence" value="ECO:0007669"/>
    <property type="project" value="TreeGrafter"/>
</dbReference>
<dbReference type="GO" id="GO:0032781">
    <property type="term" value="P:positive regulation of ATP-dependent activity"/>
    <property type="evidence" value="ECO:0000250"/>
    <property type="project" value="UniProtKB"/>
</dbReference>
<dbReference type="GO" id="GO:0050848">
    <property type="term" value="P:regulation of calcium-mediated signaling"/>
    <property type="evidence" value="ECO:0000250"/>
    <property type="project" value="UniProtKB"/>
</dbReference>
<dbReference type="FunFam" id="2.120.10.30:FF:000027">
    <property type="entry name" value="Regucalcin homologue"/>
    <property type="match status" value="1"/>
</dbReference>
<dbReference type="Gene3D" id="2.120.10.30">
    <property type="entry name" value="TolB, C-terminal domain"/>
    <property type="match status" value="1"/>
</dbReference>
<dbReference type="InterPro" id="IPR011042">
    <property type="entry name" value="6-blade_b-propeller_TolB-like"/>
</dbReference>
<dbReference type="InterPro" id="IPR008367">
    <property type="entry name" value="Regucalcin"/>
</dbReference>
<dbReference type="InterPro" id="IPR013658">
    <property type="entry name" value="SGL"/>
</dbReference>
<dbReference type="InterPro" id="IPR005511">
    <property type="entry name" value="SMP-30"/>
</dbReference>
<dbReference type="PANTHER" id="PTHR10907">
    <property type="entry name" value="REGUCALCIN"/>
    <property type="match status" value="1"/>
</dbReference>
<dbReference type="PANTHER" id="PTHR10907:SF54">
    <property type="entry name" value="REGUCALCIN"/>
    <property type="match status" value="1"/>
</dbReference>
<dbReference type="Pfam" id="PF08450">
    <property type="entry name" value="SGL"/>
    <property type="match status" value="1"/>
</dbReference>
<dbReference type="PRINTS" id="PR01791">
    <property type="entry name" value="REGUCALCIN"/>
</dbReference>
<dbReference type="PRINTS" id="PR01790">
    <property type="entry name" value="SMP30FAMILY"/>
</dbReference>
<dbReference type="SUPFAM" id="SSF63829">
    <property type="entry name" value="Calcium-dependent phosphotriesterase"/>
    <property type="match status" value="1"/>
</dbReference>
<accession>Q5R837</accession>
<comment type="function">
    <text evidence="1">Gluconolactonase with low activity towards other sugar lactones, including gulonolactone and galactonolactone. Can also hydrolyze diisopropyl phosphorofluoridate and phenylacetate (in vitro). Calcium-binding protein. Modulates Ca(2+) signaling, and Ca(2+)-dependent cellular processes and enzyme activities (By similarity).</text>
</comment>
<comment type="catalytic activity">
    <reaction>
        <text>D-glucono-1,5-lactone + H2O = D-gluconate + H(+)</text>
        <dbReference type="Rhea" id="RHEA:10440"/>
        <dbReference type="ChEBI" id="CHEBI:15377"/>
        <dbReference type="ChEBI" id="CHEBI:15378"/>
        <dbReference type="ChEBI" id="CHEBI:16217"/>
        <dbReference type="ChEBI" id="CHEBI:18391"/>
        <dbReference type="EC" id="3.1.1.17"/>
    </reaction>
</comment>
<comment type="cofactor">
    <cofactor evidence="1">
        <name>Zn(2+)</name>
        <dbReference type="ChEBI" id="CHEBI:29105"/>
    </cofactor>
    <cofactor evidence="1">
        <name>Mn(2+)</name>
        <dbReference type="ChEBI" id="CHEBI:29035"/>
    </cofactor>
    <cofactor evidence="1">
        <name>Ca(2+)</name>
        <dbReference type="ChEBI" id="CHEBI:29108"/>
    </cofactor>
    <cofactor evidence="1">
        <name>Mg(2+)</name>
        <dbReference type="ChEBI" id="CHEBI:18420"/>
    </cofactor>
    <text evidence="1">Binds 1 divalent metal cation per subunit. Most active with Zn(2+) and Mn(2+) ions. The physiological cofactor is most likely Ca(2+) or Mg(2+).</text>
</comment>
<comment type="subunit">
    <text evidence="1">Monomer.</text>
</comment>
<comment type="subcellular location">
    <subcellularLocation>
        <location evidence="1">Cytoplasm</location>
    </subcellularLocation>
</comment>
<comment type="similarity">
    <text evidence="3">Belongs to the SMP-30/CGR1 family.</text>
</comment>
<comment type="caution">
    <text evidence="3">Gluconolactonase catalyzes a key step in ascorbic acid (vitamin C) biosynthesis, but primates lack the last enzyme in the pathway and are unable to synthesize vitamin C.</text>
</comment>
<reference key="1">
    <citation type="submission" date="2004-11" db="EMBL/GenBank/DDBJ databases">
        <authorList>
            <consortium name="The German cDNA consortium"/>
        </authorList>
    </citation>
    <scope>NUCLEOTIDE SEQUENCE [LARGE SCALE MRNA]</scope>
    <source>
        <tissue>Kidney</tissue>
    </source>
</reference>
<name>RGN_PONAB</name>
<proteinExistence type="evidence at transcript level"/>